<feature type="chain" id="PRO_0000271049" description="CDAN1-interacting nuclease 1">
    <location>
        <begin position="1"/>
        <end position="303"/>
    </location>
</feature>
<reference key="1">
    <citation type="submission" date="2006-10" db="EMBL/GenBank/DDBJ databases">
        <authorList>
            <consortium name="Sanger Xenopus tropicalis EST/cDNA project"/>
        </authorList>
    </citation>
    <scope>NUCLEOTIDE SEQUENCE [LARGE SCALE MRNA]</scope>
    <source>
        <tissue>Tadpole</tissue>
    </source>
</reference>
<reference key="2">
    <citation type="submission" date="2007-03" db="EMBL/GenBank/DDBJ databases">
        <authorList>
            <consortium name="NIH - Xenopus Gene Collection (XGC) project"/>
        </authorList>
    </citation>
    <scope>NUCLEOTIDE SEQUENCE [LARGE SCALE MRNA]</scope>
    <source>
        <tissue>Embryo</tissue>
    </source>
</reference>
<gene>
    <name type="primary">cdin1</name>
    <name type="ORF">TTpA007f23.1</name>
</gene>
<accession>Q28HL3</accession>
<accession>A4IHH0</accession>
<dbReference type="EMBL" id="CR760834">
    <property type="protein sequence ID" value="CAJ83156.1"/>
    <property type="molecule type" value="mRNA"/>
</dbReference>
<dbReference type="EMBL" id="BC135523">
    <property type="protein sequence ID" value="AAI35524.1"/>
    <property type="molecule type" value="mRNA"/>
</dbReference>
<dbReference type="RefSeq" id="NP_001016489.1">
    <property type="nucleotide sequence ID" value="NM_001016489.2"/>
</dbReference>
<dbReference type="SMR" id="Q28HL3"/>
<dbReference type="FunCoup" id="Q28HL3">
    <property type="interactions" value="2812"/>
</dbReference>
<dbReference type="STRING" id="8364.ENSXETP00000052585"/>
<dbReference type="PaxDb" id="8364-ENSXETP00000028204"/>
<dbReference type="GeneID" id="549243"/>
<dbReference type="KEGG" id="xtr:549243"/>
<dbReference type="AGR" id="Xenbase:XB-GENE-941818"/>
<dbReference type="CTD" id="84529"/>
<dbReference type="Xenbase" id="XB-GENE-941818">
    <property type="gene designation" value="cdin1"/>
</dbReference>
<dbReference type="eggNOG" id="ENOG502R9SY">
    <property type="taxonomic scope" value="Eukaryota"/>
</dbReference>
<dbReference type="HOGENOM" id="CLU_076808_0_1_1"/>
<dbReference type="InParanoid" id="Q28HL3"/>
<dbReference type="OMA" id="CYWNRFG"/>
<dbReference type="OrthoDB" id="1272at2759"/>
<dbReference type="PhylomeDB" id="Q28HL3"/>
<dbReference type="TreeFam" id="TF324079"/>
<dbReference type="Proteomes" id="UP000008143">
    <property type="component" value="Chromosome 8"/>
</dbReference>
<dbReference type="Bgee" id="ENSXETG00000012896">
    <property type="expression patterns" value="Expressed in 2-cell stage embryo and 13 other cell types or tissues"/>
</dbReference>
<dbReference type="GO" id="GO:0005737">
    <property type="term" value="C:cytoplasm"/>
    <property type="evidence" value="ECO:0000250"/>
    <property type="project" value="UniProtKB"/>
</dbReference>
<dbReference type="GO" id="GO:0005634">
    <property type="term" value="C:nucleus"/>
    <property type="evidence" value="ECO:0000250"/>
    <property type="project" value="UniProtKB"/>
</dbReference>
<dbReference type="InterPro" id="IPR029404">
    <property type="entry name" value="CDIN1"/>
</dbReference>
<dbReference type="PANTHER" id="PTHR31661:SF1">
    <property type="entry name" value="CDAN1-INTERACTING NUCLEASE 1"/>
    <property type="match status" value="1"/>
</dbReference>
<dbReference type="PANTHER" id="PTHR31661">
    <property type="entry name" value="SIMILAR TO CDNA SEQUENCE BC052040"/>
    <property type="match status" value="1"/>
</dbReference>
<dbReference type="Pfam" id="PF14811">
    <property type="entry name" value="TPD"/>
    <property type="match status" value="1"/>
</dbReference>
<proteinExistence type="evidence at transcript level"/>
<organism>
    <name type="scientific">Xenopus tropicalis</name>
    <name type="common">Western clawed frog</name>
    <name type="synonym">Silurana tropicalis</name>
    <dbReference type="NCBI Taxonomy" id="8364"/>
    <lineage>
        <taxon>Eukaryota</taxon>
        <taxon>Metazoa</taxon>
        <taxon>Chordata</taxon>
        <taxon>Craniata</taxon>
        <taxon>Vertebrata</taxon>
        <taxon>Euteleostomi</taxon>
        <taxon>Amphibia</taxon>
        <taxon>Batrachia</taxon>
        <taxon>Anura</taxon>
        <taxon>Pipoidea</taxon>
        <taxon>Pipidae</taxon>
        <taxon>Xenopodinae</taxon>
        <taxon>Xenopus</taxon>
        <taxon>Silurana</taxon>
    </lineage>
</organism>
<name>CDIN1_XENTR</name>
<protein>
    <recommendedName>
        <fullName>CDAN1-interacting nuclease 1</fullName>
    </recommendedName>
</protein>
<comment type="function">
    <text evidence="1">May play a role in erythroid cell differentiation.</text>
</comment>
<comment type="subcellular location">
    <subcellularLocation>
        <location evidence="1">Nucleus</location>
    </subcellularLocation>
    <subcellularLocation>
        <location evidence="1">Cytoplasm</location>
    </subcellularLocation>
    <text evidence="1">Mainly nuclear.</text>
</comment>
<evidence type="ECO:0000250" key="1">
    <source>
        <dbReference type="UniProtKB" id="Q9Y2V0"/>
    </source>
</evidence>
<sequence length="303" mass="34834">MLLSKAQYDEIALFITTLRPTRQCMRRLKERFPCQSQSTLLSIFSQEYQKLIKRTHAKHHTPEAIEMYYARYLNEVARDPTVPILLELANEVDFSPALIARTVLERFLQDHDGQPPTKPILSSMLRDPSLIPDPVLANQVHLCIINDCCNGPLVDGIKHAIGHEHEVLLRQKLKEHNLAFLDEDQLRLKGYDKTPDVILEVPVAVDGHVIHWIESKASFGDEASHNTYLHDQFWSYWNRFGPGLVIYWYGFIEELDCNRERGILLKDGFPESLVTLGSCMAQNAEHGQHTKSRLSETHQETQS</sequence>
<keyword id="KW-0963">Cytoplasm</keyword>
<keyword id="KW-0539">Nucleus</keyword>
<keyword id="KW-1185">Reference proteome</keyword>